<comment type="function">
    <text evidence="1">Together with its co-chaperonin GroES, plays an essential role in assisting protein folding. The GroEL-GroES system forms a nano-cage that allows encapsulation of the non-native substrate proteins and provides a physical environment optimized to promote and accelerate protein folding.</text>
</comment>
<comment type="catalytic activity">
    <reaction evidence="1">
        <text>ATP + H2O + a folded polypeptide = ADP + phosphate + an unfolded polypeptide.</text>
        <dbReference type="EC" id="5.6.1.7"/>
    </reaction>
</comment>
<comment type="subunit">
    <text evidence="1">Forms a cylinder of 14 subunits composed of two heptameric rings stacked back-to-back. Interacts with the co-chaperonin GroES.</text>
</comment>
<comment type="subcellular location">
    <subcellularLocation>
        <location evidence="1">Cytoplasm</location>
    </subcellularLocation>
</comment>
<comment type="similarity">
    <text evidence="1">Belongs to the chaperonin (HSP60) family.</text>
</comment>
<dbReference type="EC" id="5.6.1.7" evidence="1"/>
<dbReference type="EMBL" id="CP001175">
    <property type="protein sequence ID" value="ACK38847.1"/>
    <property type="molecule type" value="Genomic_DNA"/>
</dbReference>
<dbReference type="RefSeq" id="WP_012580980.1">
    <property type="nucleotide sequence ID" value="NC_011660.1"/>
</dbReference>
<dbReference type="SMR" id="B8DH59"/>
<dbReference type="KEGG" id="lmh:LMHCC_0490"/>
<dbReference type="HOGENOM" id="CLU_016503_3_0_9"/>
<dbReference type="GO" id="GO:0005737">
    <property type="term" value="C:cytoplasm"/>
    <property type="evidence" value="ECO:0007669"/>
    <property type="project" value="UniProtKB-SubCell"/>
</dbReference>
<dbReference type="GO" id="GO:0005524">
    <property type="term" value="F:ATP binding"/>
    <property type="evidence" value="ECO:0007669"/>
    <property type="project" value="UniProtKB-UniRule"/>
</dbReference>
<dbReference type="GO" id="GO:0140662">
    <property type="term" value="F:ATP-dependent protein folding chaperone"/>
    <property type="evidence" value="ECO:0007669"/>
    <property type="project" value="InterPro"/>
</dbReference>
<dbReference type="GO" id="GO:0016853">
    <property type="term" value="F:isomerase activity"/>
    <property type="evidence" value="ECO:0007669"/>
    <property type="project" value="UniProtKB-KW"/>
</dbReference>
<dbReference type="GO" id="GO:0051082">
    <property type="term" value="F:unfolded protein binding"/>
    <property type="evidence" value="ECO:0007669"/>
    <property type="project" value="UniProtKB-UniRule"/>
</dbReference>
<dbReference type="GO" id="GO:0042026">
    <property type="term" value="P:protein refolding"/>
    <property type="evidence" value="ECO:0007669"/>
    <property type="project" value="UniProtKB-UniRule"/>
</dbReference>
<dbReference type="CDD" id="cd03344">
    <property type="entry name" value="GroEL"/>
    <property type="match status" value="1"/>
</dbReference>
<dbReference type="FunFam" id="1.10.560.10:FF:000001">
    <property type="entry name" value="60 kDa chaperonin"/>
    <property type="match status" value="1"/>
</dbReference>
<dbReference type="FunFam" id="3.50.7.10:FF:000001">
    <property type="entry name" value="60 kDa chaperonin"/>
    <property type="match status" value="1"/>
</dbReference>
<dbReference type="Gene3D" id="3.50.7.10">
    <property type="entry name" value="GroEL"/>
    <property type="match status" value="1"/>
</dbReference>
<dbReference type="Gene3D" id="1.10.560.10">
    <property type="entry name" value="GroEL-like equatorial domain"/>
    <property type="match status" value="1"/>
</dbReference>
<dbReference type="Gene3D" id="3.30.260.10">
    <property type="entry name" value="TCP-1-like chaperonin intermediate domain"/>
    <property type="match status" value="1"/>
</dbReference>
<dbReference type="HAMAP" id="MF_00600">
    <property type="entry name" value="CH60"/>
    <property type="match status" value="1"/>
</dbReference>
<dbReference type="InterPro" id="IPR018370">
    <property type="entry name" value="Chaperonin_Cpn60_CS"/>
</dbReference>
<dbReference type="InterPro" id="IPR001844">
    <property type="entry name" value="Cpn60/GroEL"/>
</dbReference>
<dbReference type="InterPro" id="IPR002423">
    <property type="entry name" value="Cpn60/GroEL/TCP-1"/>
</dbReference>
<dbReference type="InterPro" id="IPR027409">
    <property type="entry name" value="GroEL-like_apical_dom_sf"/>
</dbReference>
<dbReference type="InterPro" id="IPR027413">
    <property type="entry name" value="GROEL-like_equatorial_sf"/>
</dbReference>
<dbReference type="InterPro" id="IPR027410">
    <property type="entry name" value="TCP-1-like_intermed_sf"/>
</dbReference>
<dbReference type="NCBIfam" id="TIGR02348">
    <property type="entry name" value="GroEL"/>
    <property type="match status" value="1"/>
</dbReference>
<dbReference type="NCBIfam" id="NF000592">
    <property type="entry name" value="PRK00013.1"/>
    <property type="match status" value="1"/>
</dbReference>
<dbReference type="NCBIfam" id="NF009487">
    <property type="entry name" value="PRK12849.1"/>
    <property type="match status" value="1"/>
</dbReference>
<dbReference type="NCBIfam" id="NF009488">
    <property type="entry name" value="PRK12850.1"/>
    <property type="match status" value="1"/>
</dbReference>
<dbReference type="NCBIfam" id="NF009489">
    <property type="entry name" value="PRK12851.1"/>
    <property type="match status" value="1"/>
</dbReference>
<dbReference type="PANTHER" id="PTHR45633">
    <property type="entry name" value="60 KDA HEAT SHOCK PROTEIN, MITOCHONDRIAL"/>
    <property type="match status" value="1"/>
</dbReference>
<dbReference type="Pfam" id="PF00118">
    <property type="entry name" value="Cpn60_TCP1"/>
    <property type="match status" value="1"/>
</dbReference>
<dbReference type="PRINTS" id="PR00298">
    <property type="entry name" value="CHAPERONIN60"/>
</dbReference>
<dbReference type="SUPFAM" id="SSF52029">
    <property type="entry name" value="GroEL apical domain-like"/>
    <property type="match status" value="1"/>
</dbReference>
<dbReference type="SUPFAM" id="SSF48592">
    <property type="entry name" value="GroEL equatorial domain-like"/>
    <property type="match status" value="1"/>
</dbReference>
<dbReference type="SUPFAM" id="SSF54849">
    <property type="entry name" value="GroEL-intermediate domain like"/>
    <property type="match status" value="1"/>
</dbReference>
<dbReference type="PROSITE" id="PS00296">
    <property type="entry name" value="CHAPERONINS_CPN60"/>
    <property type="match status" value="1"/>
</dbReference>
<evidence type="ECO:0000255" key="1">
    <source>
        <dbReference type="HAMAP-Rule" id="MF_00600"/>
    </source>
</evidence>
<evidence type="ECO:0000256" key="2">
    <source>
        <dbReference type="SAM" id="MobiDB-lite"/>
    </source>
</evidence>
<name>CH60_LISMH</name>
<proteinExistence type="inferred from homology"/>
<protein>
    <recommendedName>
        <fullName evidence="1">Chaperonin GroEL</fullName>
        <ecNumber evidence="1">5.6.1.7</ecNumber>
    </recommendedName>
    <alternativeName>
        <fullName evidence="1">60 kDa chaperonin</fullName>
    </alternativeName>
    <alternativeName>
        <fullName evidence="1">Chaperonin-60</fullName>
        <shortName evidence="1">Cpn60</shortName>
    </alternativeName>
</protein>
<keyword id="KW-0067">ATP-binding</keyword>
<keyword id="KW-0143">Chaperone</keyword>
<keyword id="KW-0963">Cytoplasm</keyword>
<keyword id="KW-0413">Isomerase</keyword>
<keyword id="KW-0547">Nucleotide-binding</keyword>
<reference key="1">
    <citation type="journal article" date="2011" name="J. Bacteriol.">
        <title>Genome sequence of lineage III Listeria monocytogenes strain HCC23.</title>
        <authorList>
            <person name="Steele C.L."/>
            <person name="Donaldson J.R."/>
            <person name="Paul D."/>
            <person name="Banes M.M."/>
            <person name="Arick T."/>
            <person name="Bridges S.M."/>
            <person name="Lawrence M.L."/>
        </authorList>
    </citation>
    <scope>NUCLEOTIDE SEQUENCE [LARGE SCALE GENOMIC DNA]</scope>
    <source>
        <strain>HCC23</strain>
    </source>
</reference>
<sequence length="542" mass="57367">MAKDIKFSEDARRAMLRGVDQLANAVKVTLGPKGRNVVLEKKFGSPLITNDGVTIAKEIELEDPFENMGAKLVSEVASKTNDVAGDGTTTATVLAQAMIQEGLKNVTAGANPVGVRRGIEKAVATAIEELKAISKPIESKESIAQVAAISSGDEEVGKLIAEAMERVGNDGVITIEESKGFATELDVVEGMQFDRGYTSPYMVTDSDKMEAVLEKPYILITDKKINNIQEILPVLEQVVQQGRPMLIIAEDVEGEAQATLVLNKLRGTFNVVAVKAPGFGDRRKAMLEDIAVLTGGQVITEDLGLELKTATVDQLGTANKVVVTKDDTTIVEGAGDSTQISARVNQIRAQMEETTSEFDREKLQERLAKLAGGVAVVKVGAATETELKERKLRIEDALNSTRAAVEEGIVAGGGTALVSIYNKVAALEAEGDVETGINIVLRSLEEPVRQIAHNAGLEGSVIVERLKHEAVGVGFNAANGEWINMIDAGIVDPTKVTRSALQNASSVAALLLTTEAVVADKPDENGPAAVPDMGMGGMGGMM</sequence>
<gene>
    <name evidence="1" type="primary">groEL</name>
    <name evidence="1" type="synonym">groL</name>
    <name type="ordered locus">LMHCC_0490</name>
</gene>
<organism>
    <name type="scientific">Listeria monocytogenes serotype 4a (strain HCC23)</name>
    <dbReference type="NCBI Taxonomy" id="552536"/>
    <lineage>
        <taxon>Bacteria</taxon>
        <taxon>Bacillati</taxon>
        <taxon>Bacillota</taxon>
        <taxon>Bacilli</taxon>
        <taxon>Bacillales</taxon>
        <taxon>Listeriaceae</taxon>
        <taxon>Listeria</taxon>
    </lineage>
</organism>
<accession>B8DH59</accession>
<feature type="chain" id="PRO_1000147037" description="Chaperonin GroEL">
    <location>
        <begin position="1"/>
        <end position="542"/>
    </location>
</feature>
<feature type="region of interest" description="Disordered" evidence="2">
    <location>
        <begin position="522"/>
        <end position="542"/>
    </location>
</feature>
<feature type="binding site" evidence="1">
    <location>
        <begin position="29"/>
        <end position="32"/>
    </location>
    <ligand>
        <name>ATP</name>
        <dbReference type="ChEBI" id="CHEBI:30616"/>
    </ligand>
</feature>
<feature type="binding site" evidence="1">
    <location>
        <begin position="86"/>
        <end position="90"/>
    </location>
    <ligand>
        <name>ATP</name>
        <dbReference type="ChEBI" id="CHEBI:30616"/>
    </ligand>
</feature>
<feature type="binding site" evidence="1">
    <location>
        <position position="413"/>
    </location>
    <ligand>
        <name>ATP</name>
        <dbReference type="ChEBI" id="CHEBI:30616"/>
    </ligand>
</feature>
<feature type="binding site" evidence="1">
    <location>
        <begin position="476"/>
        <end position="478"/>
    </location>
    <ligand>
        <name>ATP</name>
        <dbReference type="ChEBI" id="CHEBI:30616"/>
    </ligand>
</feature>
<feature type="binding site" evidence="1">
    <location>
        <position position="492"/>
    </location>
    <ligand>
        <name>ATP</name>
        <dbReference type="ChEBI" id="CHEBI:30616"/>
    </ligand>
</feature>